<accession>Q64TC3</accession>
<dbReference type="EMBL" id="AP006841">
    <property type="protein sequence ID" value="BAD49256.1"/>
    <property type="molecule type" value="Genomic_DNA"/>
</dbReference>
<dbReference type="RefSeq" id="WP_005793588.1">
    <property type="nucleotide sequence ID" value="NC_006347.1"/>
</dbReference>
<dbReference type="RefSeq" id="YP_099790.1">
    <property type="nucleotide sequence ID" value="NC_006347.1"/>
</dbReference>
<dbReference type="SMR" id="Q64TC3"/>
<dbReference type="STRING" id="295405.BF2507"/>
<dbReference type="KEGG" id="bfr:BF2507"/>
<dbReference type="PATRIC" id="fig|295405.11.peg.2413"/>
<dbReference type="HOGENOM" id="CLU_035023_3_1_10"/>
<dbReference type="OrthoDB" id="9155749at2"/>
<dbReference type="Proteomes" id="UP000002197">
    <property type="component" value="Chromosome"/>
</dbReference>
<dbReference type="GO" id="GO:0005886">
    <property type="term" value="C:plasma membrane"/>
    <property type="evidence" value="ECO:0007669"/>
    <property type="project" value="UniProtKB-SubCell"/>
</dbReference>
<dbReference type="GO" id="GO:0008324">
    <property type="term" value="F:monoatomic cation transmembrane transporter activity"/>
    <property type="evidence" value="ECO:0007669"/>
    <property type="project" value="InterPro"/>
</dbReference>
<dbReference type="GO" id="GO:0006813">
    <property type="term" value="P:potassium ion transport"/>
    <property type="evidence" value="ECO:0007669"/>
    <property type="project" value="InterPro"/>
</dbReference>
<dbReference type="Gene3D" id="3.30.70.1450">
    <property type="entry name" value="Regulator of K+ conductance, C-terminal domain"/>
    <property type="match status" value="2"/>
</dbReference>
<dbReference type="InterPro" id="IPR050144">
    <property type="entry name" value="AAE_transporter"/>
</dbReference>
<dbReference type="InterPro" id="IPR006037">
    <property type="entry name" value="RCK_C"/>
</dbReference>
<dbReference type="InterPro" id="IPR036721">
    <property type="entry name" value="RCK_C_sf"/>
</dbReference>
<dbReference type="InterPro" id="IPR006512">
    <property type="entry name" value="YidE_YbjL"/>
</dbReference>
<dbReference type="NCBIfam" id="NF003007">
    <property type="entry name" value="PRK03818.1"/>
    <property type="match status" value="1"/>
</dbReference>
<dbReference type="NCBIfam" id="TIGR01625">
    <property type="entry name" value="YidE_YbjL_dupl"/>
    <property type="match status" value="2"/>
</dbReference>
<dbReference type="PANTHER" id="PTHR30445">
    <property type="entry name" value="K(+)_H(+) ANTIPORTER SUBUNIT KHTT"/>
    <property type="match status" value="1"/>
</dbReference>
<dbReference type="PANTHER" id="PTHR30445:SF3">
    <property type="entry name" value="TRANSPORT PROTEIN YIDE-RELATED"/>
    <property type="match status" value="1"/>
</dbReference>
<dbReference type="Pfam" id="PF06826">
    <property type="entry name" value="Asp-Al_Ex"/>
    <property type="match status" value="2"/>
</dbReference>
<dbReference type="Pfam" id="PF02080">
    <property type="entry name" value="TrkA_C"/>
    <property type="match status" value="2"/>
</dbReference>
<dbReference type="SUPFAM" id="SSF116726">
    <property type="entry name" value="TrkA C-terminal domain-like"/>
    <property type="match status" value="2"/>
</dbReference>
<dbReference type="PROSITE" id="PS51202">
    <property type="entry name" value="RCK_C"/>
    <property type="match status" value="2"/>
</dbReference>
<comment type="subcellular location">
    <subcellularLocation>
        <location evidence="3">Cell membrane</location>
        <topology evidence="3">Multi-pass membrane protein</topology>
    </subcellularLocation>
</comment>
<comment type="similarity">
    <text evidence="3">Belongs to the AAE transporter (TC 2.A.81) family.</text>
</comment>
<reference key="1">
    <citation type="journal article" date="2004" name="Proc. Natl. Acad. Sci. U.S.A.">
        <title>Genomic analysis of Bacteroides fragilis reveals extensive DNA inversions regulating cell surface adaptation.</title>
        <authorList>
            <person name="Kuwahara T."/>
            <person name="Yamashita A."/>
            <person name="Hirakawa H."/>
            <person name="Nakayama H."/>
            <person name="Toh H."/>
            <person name="Okada N."/>
            <person name="Kuhara S."/>
            <person name="Hattori M."/>
            <person name="Hayashi T."/>
            <person name="Ohnishi Y."/>
        </authorList>
    </citation>
    <scope>NUCLEOTIDE SEQUENCE [LARGE SCALE GENOMIC DNA]</scope>
    <source>
        <strain>YCH46</strain>
    </source>
</reference>
<sequence>MELLRNLFEGYPNLWGGGVAHSVLILSLVIAFGIMLGKIKVAGISLGVTWILFVGIVFGHFNLNLNEHLLHFLKEFGLILFVYSIGLQVGPGFFSAFKKGGFTLNMLAMIVVFAGVIITLALHFITGIPITTMVGILSGAVTNTPGLGAAQQANSDLTGIDAPEIALGYAVAYPLGVVGCIMSLLGLKYLFRINTKQEEAEAEQGLGHLQELTVRPVSLEVRNEALHGKRIKDIRPLVNRNFVVSRIRHLNGKKESELVNSDTELHLGDEILVIATPIDIEAITAFFGKPIEVEWEQLNKELISRRILITKPELNGKTLAQLKIRNNFGASVTRVNRSGVDLVASPQLQLQMGDRVTIVGSELAVSHAEKVLGNSMKRLNHPNLIPIFLGIALGCILGSIPFMFPGIPQPVKLGLAGGPLIVSILISRFGPQYKLITYTTMSANLMIREIGISLFLACVGLGAGDGFVETIIHEGGYVWIAYGMIITIVPLLLAGFIGRYAFKLNYYTLIGVLAGSTTNPPALAYSNDLTSCDAPAVGYATVYPLTMFLRVLTAQLLILSLG</sequence>
<name>Y2507_BACFR</name>
<keyword id="KW-1003">Cell membrane</keyword>
<keyword id="KW-0472">Membrane</keyword>
<keyword id="KW-0677">Repeat</keyword>
<keyword id="KW-0812">Transmembrane</keyword>
<keyword id="KW-1133">Transmembrane helix</keyword>
<keyword id="KW-0813">Transport</keyword>
<feature type="chain" id="PRO_0000208751" description="Uncharacterized transporter BF2507">
    <location>
        <begin position="1"/>
        <end position="562"/>
    </location>
</feature>
<feature type="transmembrane region" description="Helical" evidence="1">
    <location>
        <begin position="15"/>
        <end position="34"/>
    </location>
</feature>
<feature type="transmembrane region" description="Helical" evidence="1">
    <location>
        <begin position="41"/>
        <end position="63"/>
    </location>
</feature>
<feature type="transmembrane region" description="Helical" evidence="1">
    <location>
        <begin position="78"/>
        <end position="97"/>
    </location>
</feature>
<feature type="transmembrane region" description="Helical" evidence="1">
    <location>
        <begin position="104"/>
        <end position="126"/>
    </location>
</feature>
<feature type="transmembrane region" description="Helical" evidence="1">
    <location>
        <begin position="165"/>
        <end position="187"/>
    </location>
</feature>
<feature type="transmembrane region" description="Helical" evidence="1">
    <location>
        <begin position="384"/>
        <end position="403"/>
    </location>
</feature>
<feature type="transmembrane region" description="Helical" evidence="1">
    <location>
        <begin position="413"/>
        <end position="430"/>
    </location>
</feature>
<feature type="transmembrane region" description="Helical" evidence="1">
    <location>
        <begin position="450"/>
        <end position="472"/>
    </location>
</feature>
<feature type="transmembrane region" description="Helical" evidence="1">
    <location>
        <begin position="476"/>
        <end position="498"/>
    </location>
</feature>
<feature type="transmembrane region" description="Helical" evidence="1">
    <location>
        <begin position="505"/>
        <end position="524"/>
    </location>
</feature>
<feature type="transmembrane region" description="Helical" evidence="1">
    <location>
        <begin position="539"/>
        <end position="561"/>
    </location>
</feature>
<feature type="domain" description="RCK C-terminal 1" evidence="2">
    <location>
        <begin position="204"/>
        <end position="286"/>
    </location>
</feature>
<feature type="domain" description="RCK C-terminal 2" evidence="2">
    <location>
        <begin position="289"/>
        <end position="374"/>
    </location>
</feature>
<evidence type="ECO:0000255" key="1"/>
<evidence type="ECO:0000255" key="2">
    <source>
        <dbReference type="PROSITE-ProRule" id="PRU00544"/>
    </source>
</evidence>
<evidence type="ECO:0000305" key="3"/>
<proteinExistence type="inferred from homology"/>
<organism>
    <name type="scientific">Bacteroides fragilis (strain YCH46)</name>
    <dbReference type="NCBI Taxonomy" id="295405"/>
    <lineage>
        <taxon>Bacteria</taxon>
        <taxon>Pseudomonadati</taxon>
        <taxon>Bacteroidota</taxon>
        <taxon>Bacteroidia</taxon>
        <taxon>Bacteroidales</taxon>
        <taxon>Bacteroidaceae</taxon>
        <taxon>Bacteroides</taxon>
    </lineage>
</organism>
<gene>
    <name type="ordered locus">BF2507</name>
</gene>
<protein>
    <recommendedName>
        <fullName>Uncharacterized transporter BF2507</fullName>
    </recommendedName>
</protein>